<accession>Q7V9C4</accession>
<evidence type="ECO:0000255" key="1">
    <source>
        <dbReference type="HAMAP-Rule" id="MF_00037"/>
    </source>
</evidence>
<name>MURB_PROMM</name>
<gene>
    <name evidence="1" type="primary">murB</name>
    <name type="ordered locus">PMT_0026</name>
</gene>
<keyword id="KW-0131">Cell cycle</keyword>
<keyword id="KW-0132">Cell division</keyword>
<keyword id="KW-0133">Cell shape</keyword>
<keyword id="KW-0961">Cell wall biogenesis/degradation</keyword>
<keyword id="KW-0963">Cytoplasm</keyword>
<keyword id="KW-0274">FAD</keyword>
<keyword id="KW-0285">Flavoprotein</keyword>
<keyword id="KW-0521">NADP</keyword>
<keyword id="KW-0560">Oxidoreductase</keyword>
<keyword id="KW-0573">Peptidoglycan synthesis</keyword>
<keyword id="KW-1185">Reference proteome</keyword>
<dbReference type="EC" id="1.3.1.98" evidence="1"/>
<dbReference type="EMBL" id="BX548175">
    <property type="protein sequence ID" value="CAE20201.1"/>
    <property type="molecule type" value="Genomic_DNA"/>
</dbReference>
<dbReference type="RefSeq" id="WP_011129405.1">
    <property type="nucleotide sequence ID" value="NC_005071.1"/>
</dbReference>
<dbReference type="SMR" id="Q7V9C4"/>
<dbReference type="KEGG" id="pmt:PMT_0026"/>
<dbReference type="eggNOG" id="COG0812">
    <property type="taxonomic scope" value="Bacteria"/>
</dbReference>
<dbReference type="HOGENOM" id="CLU_035304_1_1_3"/>
<dbReference type="OrthoDB" id="9804753at2"/>
<dbReference type="UniPathway" id="UPA00219"/>
<dbReference type="Proteomes" id="UP000001423">
    <property type="component" value="Chromosome"/>
</dbReference>
<dbReference type="GO" id="GO:0005829">
    <property type="term" value="C:cytosol"/>
    <property type="evidence" value="ECO:0007669"/>
    <property type="project" value="TreeGrafter"/>
</dbReference>
<dbReference type="GO" id="GO:0071949">
    <property type="term" value="F:FAD binding"/>
    <property type="evidence" value="ECO:0007669"/>
    <property type="project" value="InterPro"/>
</dbReference>
<dbReference type="GO" id="GO:0008762">
    <property type="term" value="F:UDP-N-acetylmuramate dehydrogenase activity"/>
    <property type="evidence" value="ECO:0007669"/>
    <property type="project" value="UniProtKB-UniRule"/>
</dbReference>
<dbReference type="GO" id="GO:0051301">
    <property type="term" value="P:cell division"/>
    <property type="evidence" value="ECO:0007669"/>
    <property type="project" value="UniProtKB-KW"/>
</dbReference>
<dbReference type="GO" id="GO:0071555">
    <property type="term" value="P:cell wall organization"/>
    <property type="evidence" value="ECO:0007669"/>
    <property type="project" value="UniProtKB-KW"/>
</dbReference>
<dbReference type="GO" id="GO:0009252">
    <property type="term" value="P:peptidoglycan biosynthetic process"/>
    <property type="evidence" value="ECO:0007669"/>
    <property type="project" value="UniProtKB-UniRule"/>
</dbReference>
<dbReference type="GO" id="GO:0008360">
    <property type="term" value="P:regulation of cell shape"/>
    <property type="evidence" value="ECO:0007669"/>
    <property type="project" value="UniProtKB-KW"/>
</dbReference>
<dbReference type="Gene3D" id="3.30.465.10">
    <property type="match status" value="1"/>
</dbReference>
<dbReference type="Gene3D" id="3.90.78.10">
    <property type="entry name" value="UDP-N-acetylenolpyruvoylglucosamine reductase, C-terminal domain"/>
    <property type="match status" value="1"/>
</dbReference>
<dbReference type="Gene3D" id="3.30.43.10">
    <property type="entry name" value="Uridine Diphospho-n-acetylenolpyruvylglucosamine Reductase, domain 2"/>
    <property type="match status" value="1"/>
</dbReference>
<dbReference type="HAMAP" id="MF_00037">
    <property type="entry name" value="MurB"/>
    <property type="match status" value="1"/>
</dbReference>
<dbReference type="InterPro" id="IPR016166">
    <property type="entry name" value="FAD-bd_PCMH"/>
</dbReference>
<dbReference type="InterPro" id="IPR036318">
    <property type="entry name" value="FAD-bd_PCMH-like_sf"/>
</dbReference>
<dbReference type="InterPro" id="IPR016167">
    <property type="entry name" value="FAD-bd_PCMH_sub1"/>
</dbReference>
<dbReference type="InterPro" id="IPR016169">
    <property type="entry name" value="FAD-bd_PCMH_sub2"/>
</dbReference>
<dbReference type="InterPro" id="IPR003170">
    <property type="entry name" value="MurB"/>
</dbReference>
<dbReference type="InterPro" id="IPR011601">
    <property type="entry name" value="MurB_C"/>
</dbReference>
<dbReference type="InterPro" id="IPR036635">
    <property type="entry name" value="MurB_C_sf"/>
</dbReference>
<dbReference type="InterPro" id="IPR006094">
    <property type="entry name" value="Oxid_FAD_bind_N"/>
</dbReference>
<dbReference type="NCBIfam" id="TIGR00179">
    <property type="entry name" value="murB"/>
    <property type="match status" value="1"/>
</dbReference>
<dbReference type="NCBIfam" id="NF010480">
    <property type="entry name" value="PRK13905.1"/>
    <property type="match status" value="1"/>
</dbReference>
<dbReference type="PANTHER" id="PTHR21071">
    <property type="entry name" value="UDP-N-ACETYLENOLPYRUVOYLGLUCOSAMINE REDUCTASE"/>
    <property type="match status" value="1"/>
</dbReference>
<dbReference type="PANTHER" id="PTHR21071:SF4">
    <property type="entry name" value="UDP-N-ACETYLENOLPYRUVOYLGLUCOSAMINE REDUCTASE"/>
    <property type="match status" value="1"/>
</dbReference>
<dbReference type="Pfam" id="PF01565">
    <property type="entry name" value="FAD_binding_4"/>
    <property type="match status" value="1"/>
</dbReference>
<dbReference type="Pfam" id="PF02873">
    <property type="entry name" value="MurB_C"/>
    <property type="match status" value="1"/>
</dbReference>
<dbReference type="SUPFAM" id="SSF56176">
    <property type="entry name" value="FAD-binding/transporter-associated domain-like"/>
    <property type="match status" value="1"/>
</dbReference>
<dbReference type="SUPFAM" id="SSF56194">
    <property type="entry name" value="Uridine diphospho-N-Acetylenolpyruvylglucosamine reductase, MurB, C-terminal domain"/>
    <property type="match status" value="1"/>
</dbReference>
<dbReference type="PROSITE" id="PS51387">
    <property type="entry name" value="FAD_PCMH"/>
    <property type="match status" value="1"/>
</dbReference>
<proteinExistence type="inferred from homology"/>
<feature type="chain" id="PRO_0000179240" description="UDP-N-acetylenolpyruvoylglucosamine reductase">
    <location>
        <begin position="1"/>
        <end position="307"/>
    </location>
</feature>
<feature type="domain" description="FAD-binding PCMH-type" evidence="1">
    <location>
        <begin position="29"/>
        <end position="197"/>
    </location>
</feature>
<feature type="active site" evidence="1">
    <location>
        <position position="176"/>
    </location>
</feature>
<feature type="active site" description="Proton donor" evidence="1">
    <location>
        <position position="227"/>
    </location>
</feature>
<feature type="active site" evidence="1">
    <location>
        <position position="297"/>
    </location>
</feature>
<comment type="function">
    <text evidence="1">Cell wall formation.</text>
</comment>
<comment type="catalytic activity">
    <reaction evidence="1">
        <text>UDP-N-acetyl-alpha-D-muramate + NADP(+) = UDP-N-acetyl-3-O-(1-carboxyvinyl)-alpha-D-glucosamine + NADPH + H(+)</text>
        <dbReference type="Rhea" id="RHEA:12248"/>
        <dbReference type="ChEBI" id="CHEBI:15378"/>
        <dbReference type="ChEBI" id="CHEBI:57783"/>
        <dbReference type="ChEBI" id="CHEBI:58349"/>
        <dbReference type="ChEBI" id="CHEBI:68483"/>
        <dbReference type="ChEBI" id="CHEBI:70757"/>
        <dbReference type="EC" id="1.3.1.98"/>
    </reaction>
</comment>
<comment type="cofactor">
    <cofactor evidence="1">
        <name>FAD</name>
        <dbReference type="ChEBI" id="CHEBI:57692"/>
    </cofactor>
</comment>
<comment type="pathway">
    <text evidence="1">Cell wall biogenesis; peptidoglycan biosynthesis.</text>
</comment>
<comment type="subcellular location">
    <subcellularLocation>
        <location evidence="1">Cytoplasm</location>
    </subcellularLocation>
</comment>
<comment type="similarity">
    <text evidence="1">Belongs to the MurB family.</text>
</comment>
<sequence length="307" mass="32928">MPTLPGSLTLVKGIKPQPLVSLANFTSWRVGGPAEWFASPSSVEELQTLIAWAYEQKMPCRVIGAGSNLLINDTGLPGLSLCMRKLQGSDLDPKTGIVEALAGEPIPNLSKRAAKVGLHGLEWAVGIPGTVGGAAVMNAGAQGGCTADWLESVQVLDLNGEGPFELSRQELDYAYRQSLLQEKTLVVLSARFRLDPGHDHKELNQITQQNLTHRTTTQPYQLPSCGSVFRNPEPLKAGRLIEALGLKGHRIGGAEVSPIHANFIVNIGGATAADINQMITLIQQRVQMAHGVMLHPEVKRLGFEATA</sequence>
<organism>
    <name type="scientific">Prochlorococcus marinus (strain MIT 9313)</name>
    <dbReference type="NCBI Taxonomy" id="74547"/>
    <lineage>
        <taxon>Bacteria</taxon>
        <taxon>Bacillati</taxon>
        <taxon>Cyanobacteriota</taxon>
        <taxon>Cyanophyceae</taxon>
        <taxon>Synechococcales</taxon>
        <taxon>Prochlorococcaceae</taxon>
        <taxon>Prochlorococcus</taxon>
    </lineage>
</organism>
<protein>
    <recommendedName>
        <fullName evidence="1">UDP-N-acetylenolpyruvoylglucosamine reductase</fullName>
        <ecNumber evidence="1">1.3.1.98</ecNumber>
    </recommendedName>
    <alternativeName>
        <fullName evidence="1">UDP-N-acetylmuramate dehydrogenase</fullName>
    </alternativeName>
</protein>
<reference key="1">
    <citation type="journal article" date="2003" name="Nature">
        <title>Genome divergence in two Prochlorococcus ecotypes reflects oceanic niche differentiation.</title>
        <authorList>
            <person name="Rocap G."/>
            <person name="Larimer F.W."/>
            <person name="Lamerdin J.E."/>
            <person name="Malfatti S."/>
            <person name="Chain P."/>
            <person name="Ahlgren N.A."/>
            <person name="Arellano A."/>
            <person name="Coleman M."/>
            <person name="Hauser L."/>
            <person name="Hess W.R."/>
            <person name="Johnson Z.I."/>
            <person name="Land M.L."/>
            <person name="Lindell D."/>
            <person name="Post A.F."/>
            <person name="Regala W."/>
            <person name="Shah M."/>
            <person name="Shaw S.L."/>
            <person name="Steglich C."/>
            <person name="Sullivan M.B."/>
            <person name="Ting C.S."/>
            <person name="Tolonen A."/>
            <person name="Webb E.A."/>
            <person name="Zinser E.R."/>
            <person name="Chisholm S.W."/>
        </authorList>
    </citation>
    <scope>NUCLEOTIDE SEQUENCE [LARGE SCALE GENOMIC DNA]</scope>
    <source>
        <strain>MIT 9313</strain>
    </source>
</reference>